<feature type="chain" id="PRO_1000055279" description="Large ribosomal subunit protein uL6">
    <location>
        <begin position="1"/>
        <end position="177"/>
    </location>
</feature>
<gene>
    <name evidence="1" type="primary">rplF</name>
    <name type="ordered locus">Pden_0774</name>
</gene>
<proteinExistence type="inferred from homology"/>
<evidence type="ECO:0000255" key="1">
    <source>
        <dbReference type="HAMAP-Rule" id="MF_01365"/>
    </source>
</evidence>
<evidence type="ECO:0000305" key="2"/>
<dbReference type="EMBL" id="CP000489">
    <property type="protein sequence ID" value="ABL68886.1"/>
    <property type="molecule type" value="Genomic_DNA"/>
</dbReference>
<dbReference type="RefSeq" id="WP_011747114.1">
    <property type="nucleotide sequence ID" value="NC_008686.1"/>
</dbReference>
<dbReference type="SMR" id="A1B042"/>
<dbReference type="STRING" id="318586.Pden_0774"/>
<dbReference type="EnsemblBacteria" id="ABL68886">
    <property type="protein sequence ID" value="ABL68886"/>
    <property type="gene ID" value="Pden_0774"/>
</dbReference>
<dbReference type="GeneID" id="93451998"/>
<dbReference type="KEGG" id="pde:Pden_0774"/>
<dbReference type="eggNOG" id="COG0097">
    <property type="taxonomic scope" value="Bacteria"/>
</dbReference>
<dbReference type="HOGENOM" id="CLU_065464_1_2_5"/>
<dbReference type="OrthoDB" id="9805007at2"/>
<dbReference type="Proteomes" id="UP000000361">
    <property type="component" value="Chromosome 1"/>
</dbReference>
<dbReference type="GO" id="GO:0022625">
    <property type="term" value="C:cytosolic large ribosomal subunit"/>
    <property type="evidence" value="ECO:0007669"/>
    <property type="project" value="TreeGrafter"/>
</dbReference>
<dbReference type="GO" id="GO:0019843">
    <property type="term" value="F:rRNA binding"/>
    <property type="evidence" value="ECO:0007669"/>
    <property type="project" value="UniProtKB-UniRule"/>
</dbReference>
<dbReference type="GO" id="GO:0003735">
    <property type="term" value="F:structural constituent of ribosome"/>
    <property type="evidence" value="ECO:0007669"/>
    <property type="project" value="InterPro"/>
</dbReference>
<dbReference type="GO" id="GO:0002181">
    <property type="term" value="P:cytoplasmic translation"/>
    <property type="evidence" value="ECO:0007669"/>
    <property type="project" value="TreeGrafter"/>
</dbReference>
<dbReference type="FunFam" id="3.90.930.12:FF:000001">
    <property type="entry name" value="50S ribosomal protein L6"/>
    <property type="match status" value="1"/>
</dbReference>
<dbReference type="Gene3D" id="3.90.930.12">
    <property type="entry name" value="Ribosomal protein L6, alpha-beta domain"/>
    <property type="match status" value="2"/>
</dbReference>
<dbReference type="HAMAP" id="MF_01365_B">
    <property type="entry name" value="Ribosomal_uL6_B"/>
    <property type="match status" value="1"/>
</dbReference>
<dbReference type="InterPro" id="IPR000702">
    <property type="entry name" value="Ribosomal_uL6-like"/>
</dbReference>
<dbReference type="InterPro" id="IPR036789">
    <property type="entry name" value="Ribosomal_uL6-like_a/b-dom_sf"/>
</dbReference>
<dbReference type="InterPro" id="IPR020040">
    <property type="entry name" value="Ribosomal_uL6_a/b-dom"/>
</dbReference>
<dbReference type="InterPro" id="IPR019906">
    <property type="entry name" value="Ribosomal_uL6_bac-type"/>
</dbReference>
<dbReference type="InterPro" id="IPR002358">
    <property type="entry name" value="Ribosomal_uL6_CS"/>
</dbReference>
<dbReference type="NCBIfam" id="TIGR03654">
    <property type="entry name" value="L6_bact"/>
    <property type="match status" value="1"/>
</dbReference>
<dbReference type="PANTHER" id="PTHR11655">
    <property type="entry name" value="60S/50S RIBOSOMAL PROTEIN L6/L9"/>
    <property type="match status" value="1"/>
</dbReference>
<dbReference type="PANTHER" id="PTHR11655:SF14">
    <property type="entry name" value="LARGE RIBOSOMAL SUBUNIT PROTEIN UL6M"/>
    <property type="match status" value="1"/>
</dbReference>
<dbReference type="Pfam" id="PF00347">
    <property type="entry name" value="Ribosomal_L6"/>
    <property type="match status" value="2"/>
</dbReference>
<dbReference type="PIRSF" id="PIRSF002162">
    <property type="entry name" value="Ribosomal_L6"/>
    <property type="match status" value="1"/>
</dbReference>
<dbReference type="PRINTS" id="PR00059">
    <property type="entry name" value="RIBOSOMALL6"/>
</dbReference>
<dbReference type="SUPFAM" id="SSF56053">
    <property type="entry name" value="Ribosomal protein L6"/>
    <property type="match status" value="2"/>
</dbReference>
<dbReference type="PROSITE" id="PS00525">
    <property type="entry name" value="RIBOSOMAL_L6_1"/>
    <property type="match status" value="1"/>
</dbReference>
<protein>
    <recommendedName>
        <fullName evidence="1">Large ribosomal subunit protein uL6</fullName>
    </recommendedName>
    <alternativeName>
        <fullName evidence="2">50S ribosomal protein L6</fullName>
    </alternativeName>
</protein>
<sequence length="177" mass="19497">MSRIGKKPVALPKGVTAEIKGQTIEVKGPKGTRSFTATDDVTLAIEEGAVKVTPRGLSKRARQQWGMTRSMVENLTVGVSEGFKKELEIQGVGYRAQMQGKTLKLALGYSHDVNFETPEGVTISAPKQTEIVVEGIDQQLVGQVAANIREWRRPEPYKGKGIRYKGEVVFRKEGKKK</sequence>
<organism>
    <name type="scientific">Paracoccus denitrificans (strain Pd 1222)</name>
    <dbReference type="NCBI Taxonomy" id="318586"/>
    <lineage>
        <taxon>Bacteria</taxon>
        <taxon>Pseudomonadati</taxon>
        <taxon>Pseudomonadota</taxon>
        <taxon>Alphaproteobacteria</taxon>
        <taxon>Rhodobacterales</taxon>
        <taxon>Paracoccaceae</taxon>
        <taxon>Paracoccus</taxon>
    </lineage>
</organism>
<reference key="1">
    <citation type="submission" date="2006-12" db="EMBL/GenBank/DDBJ databases">
        <title>Complete sequence of chromosome 1 of Paracoccus denitrificans PD1222.</title>
        <authorList>
            <person name="Copeland A."/>
            <person name="Lucas S."/>
            <person name="Lapidus A."/>
            <person name="Barry K."/>
            <person name="Detter J.C."/>
            <person name="Glavina del Rio T."/>
            <person name="Hammon N."/>
            <person name="Israni S."/>
            <person name="Dalin E."/>
            <person name="Tice H."/>
            <person name="Pitluck S."/>
            <person name="Munk A.C."/>
            <person name="Brettin T."/>
            <person name="Bruce D."/>
            <person name="Han C."/>
            <person name="Tapia R."/>
            <person name="Gilna P."/>
            <person name="Schmutz J."/>
            <person name="Larimer F."/>
            <person name="Land M."/>
            <person name="Hauser L."/>
            <person name="Kyrpides N."/>
            <person name="Lykidis A."/>
            <person name="Spiro S."/>
            <person name="Richardson D.J."/>
            <person name="Moir J.W.B."/>
            <person name="Ferguson S.J."/>
            <person name="van Spanning R.J.M."/>
            <person name="Richardson P."/>
        </authorList>
    </citation>
    <scope>NUCLEOTIDE SEQUENCE [LARGE SCALE GENOMIC DNA]</scope>
    <source>
        <strain>Pd 1222</strain>
    </source>
</reference>
<name>RL6_PARDP</name>
<comment type="function">
    <text evidence="1">This protein binds to the 23S rRNA, and is important in its secondary structure. It is located near the subunit interface in the base of the L7/L12 stalk, and near the tRNA binding site of the peptidyltransferase center.</text>
</comment>
<comment type="subunit">
    <text evidence="1">Part of the 50S ribosomal subunit.</text>
</comment>
<comment type="similarity">
    <text evidence="1">Belongs to the universal ribosomal protein uL6 family.</text>
</comment>
<keyword id="KW-1185">Reference proteome</keyword>
<keyword id="KW-0687">Ribonucleoprotein</keyword>
<keyword id="KW-0689">Ribosomal protein</keyword>
<keyword id="KW-0694">RNA-binding</keyword>
<keyword id="KW-0699">rRNA-binding</keyword>
<accession>A1B042</accession>